<dbReference type="EC" id="3.2.2.-" evidence="1"/>
<dbReference type="EMBL" id="CP001099">
    <property type="protein sequence ID" value="ACF10774.1"/>
    <property type="molecule type" value="Genomic_DNA"/>
</dbReference>
<dbReference type="RefSeq" id="WP_012501607.1">
    <property type="nucleotide sequence ID" value="NC_011027.1"/>
</dbReference>
<dbReference type="SMR" id="B3QKY6"/>
<dbReference type="STRING" id="517417.Cpar_0350"/>
<dbReference type="KEGG" id="cpc:Cpar_0350"/>
<dbReference type="eggNOG" id="COG2094">
    <property type="taxonomic scope" value="Bacteria"/>
</dbReference>
<dbReference type="HOGENOM" id="CLU_060471_3_0_10"/>
<dbReference type="OrthoDB" id="9794313at2"/>
<dbReference type="Proteomes" id="UP000008811">
    <property type="component" value="Chromosome"/>
</dbReference>
<dbReference type="GO" id="GO:0003905">
    <property type="term" value="F:alkylbase DNA N-glycosylase activity"/>
    <property type="evidence" value="ECO:0007669"/>
    <property type="project" value="InterPro"/>
</dbReference>
<dbReference type="GO" id="GO:0003677">
    <property type="term" value="F:DNA binding"/>
    <property type="evidence" value="ECO:0007669"/>
    <property type="project" value="InterPro"/>
</dbReference>
<dbReference type="GO" id="GO:0006284">
    <property type="term" value="P:base-excision repair"/>
    <property type="evidence" value="ECO:0007669"/>
    <property type="project" value="InterPro"/>
</dbReference>
<dbReference type="CDD" id="cd00540">
    <property type="entry name" value="AAG"/>
    <property type="match status" value="1"/>
</dbReference>
<dbReference type="FunFam" id="3.10.300.10:FF:000001">
    <property type="entry name" value="Putative 3-methyladenine DNA glycosylase"/>
    <property type="match status" value="1"/>
</dbReference>
<dbReference type="Gene3D" id="3.10.300.10">
    <property type="entry name" value="Methylpurine-DNA glycosylase (MPG)"/>
    <property type="match status" value="1"/>
</dbReference>
<dbReference type="HAMAP" id="MF_00527">
    <property type="entry name" value="3MGH"/>
    <property type="match status" value="1"/>
</dbReference>
<dbReference type="InterPro" id="IPR011034">
    <property type="entry name" value="Formyl_transferase-like_C_sf"/>
</dbReference>
<dbReference type="InterPro" id="IPR003180">
    <property type="entry name" value="MPG"/>
</dbReference>
<dbReference type="InterPro" id="IPR036995">
    <property type="entry name" value="MPG_sf"/>
</dbReference>
<dbReference type="NCBIfam" id="TIGR00567">
    <property type="entry name" value="3mg"/>
    <property type="match status" value="1"/>
</dbReference>
<dbReference type="NCBIfam" id="NF002003">
    <property type="entry name" value="PRK00802.1-3"/>
    <property type="match status" value="1"/>
</dbReference>
<dbReference type="PANTHER" id="PTHR10429">
    <property type="entry name" value="DNA-3-METHYLADENINE GLYCOSYLASE"/>
    <property type="match status" value="1"/>
</dbReference>
<dbReference type="PANTHER" id="PTHR10429:SF0">
    <property type="entry name" value="DNA-3-METHYLADENINE GLYCOSYLASE"/>
    <property type="match status" value="1"/>
</dbReference>
<dbReference type="Pfam" id="PF02245">
    <property type="entry name" value="Pur_DNA_glyco"/>
    <property type="match status" value="1"/>
</dbReference>
<dbReference type="SUPFAM" id="SSF50486">
    <property type="entry name" value="FMT C-terminal domain-like"/>
    <property type="match status" value="1"/>
</dbReference>
<name>3MGH_CHLP8</name>
<reference key="1">
    <citation type="submission" date="2008-06" db="EMBL/GenBank/DDBJ databases">
        <title>Complete sequence of Chlorobaculum parvum NCIB 8327.</title>
        <authorList>
            <consortium name="US DOE Joint Genome Institute"/>
            <person name="Lucas S."/>
            <person name="Copeland A."/>
            <person name="Lapidus A."/>
            <person name="Glavina del Rio T."/>
            <person name="Dalin E."/>
            <person name="Tice H."/>
            <person name="Bruce D."/>
            <person name="Goodwin L."/>
            <person name="Pitluck S."/>
            <person name="Schmutz J."/>
            <person name="Larimer F."/>
            <person name="Land M."/>
            <person name="Hauser L."/>
            <person name="Kyrpides N."/>
            <person name="Mikhailova N."/>
            <person name="Zhao F."/>
            <person name="Li T."/>
            <person name="Liu Z."/>
            <person name="Overmann J."/>
            <person name="Bryant D.A."/>
            <person name="Richardson P."/>
        </authorList>
    </citation>
    <scope>NUCLEOTIDE SEQUENCE [LARGE SCALE GENOMIC DNA]</scope>
    <source>
        <strain>DSM 263 / NCIMB 8327</strain>
    </source>
</reference>
<evidence type="ECO:0000255" key="1">
    <source>
        <dbReference type="HAMAP-Rule" id="MF_00527"/>
    </source>
</evidence>
<evidence type="ECO:0000256" key="2">
    <source>
        <dbReference type="SAM" id="MobiDB-lite"/>
    </source>
</evidence>
<comment type="similarity">
    <text evidence="1">Belongs to the DNA glycosylase MPG family.</text>
</comment>
<protein>
    <recommendedName>
        <fullName evidence="1">Putative 3-methyladenine DNA glycosylase</fullName>
        <ecNumber evidence="1">3.2.2.-</ecNumber>
    </recommendedName>
</protein>
<keyword id="KW-0227">DNA damage</keyword>
<keyword id="KW-0234">DNA repair</keyword>
<keyword id="KW-0378">Hydrolase</keyword>
<proteinExistence type="inferred from homology"/>
<organism>
    <name type="scientific">Chlorobaculum parvum (strain DSM 263 / NCIMB 8327)</name>
    <name type="common">Chlorobium vibrioforme subsp. thiosulfatophilum</name>
    <dbReference type="NCBI Taxonomy" id="517417"/>
    <lineage>
        <taxon>Bacteria</taxon>
        <taxon>Pseudomonadati</taxon>
        <taxon>Chlorobiota</taxon>
        <taxon>Chlorobiia</taxon>
        <taxon>Chlorobiales</taxon>
        <taxon>Chlorobiaceae</taxon>
        <taxon>Chlorobaculum</taxon>
    </lineage>
</organism>
<accession>B3QKY6</accession>
<gene>
    <name type="ordered locus">Cpar_0350</name>
</gene>
<sequence length="209" mass="23356">MKRLGAEFYQAPTLELAERLLGKIFVRCEDTGMVTKARIVETEAYLGEGDEACHAWRGMTNRNRAMFGPPGHLYIYFTYGCHYMINIVSEQEGTAGAVLLRAMEPLEGIDRMQERRGTADERALMSGPGKLAQALGIGPELYGSSLLGESCWLEDAPEIPEELIGTSPRIGITRSTELPWRKFVTASPHVSTTRLGAPKKKRQKRLERR</sequence>
<feature type="chain" id="PRO_1000127754" description="Putative 3-methyladenine DNA glycosylase">
    <location>
        <begin position="1"/>
        <end position="209"/>
    </location>
</feature>
<feature type="region of interest" description="Disordered" evidence="2">
    <location>
        <begin position="189"/>
        <end position="209"/>
    </location>
</feature>
<feature type="compositionally biased region" description="Basic residues" evidence="2">
    <location>
        <begin position="197"/>
        <end position="209"/>
    </location>
</feature>